<protein>
    <recommendedName>
        <fullName>Putative 4-hydroxy-4-methyl-2-oxoglutarate aldolase</fullName>
        <shortName>HMG aldolase</shortName>
        <ecNumber>4.1.3.17</ecNumber>
    </recommendedName>
    <alternativeName>
        <fullName>Oxaloacetate decarboxylase</fullName>
        <shortName>OAA decarboxylase</shortName>
        <ecNumber>4.1.1.112</ecNumber>
    </alternativeName>
    <alternativeName>
        <fullName>Regulator of ribonuclease activity homolog</fullName>
    </alternativeName>
    <alternativeName>
        <fullName>RraA-like protein</fullName>
    </alternativeName>
</protein>
<evidence type="ECO:0000250" key="1"/>
<evidence type="ECO:0000305" key="2"/>
<keyword id="KW-0456">Lyase</keyword>
<keyword id="KW-0479">Metal-binding</keyword>
<accession>A1TGZ7</accession>
<feature type="chain" id="PRO_1000194864" description="Putative 4-hydroxy-4-methyl-2-oxoglutarate aldolase">
    <location>
        <begin position="1"/>
        <end position="160"/>
    </location>
</feature>
<feature type="binding site" evidence="1">
    <location>
        <begin position="78"/>
        <end position="81"/>
    </location>
    <ligand>
        <name>substrate</name>
    </ligand>
</feature>
<feature type="binding site" evidence="1">
    <location>
        <position position="100"/>
    </location>
    <ligand>
        <name>substrate</name>
    </ligand>
</feature>
<feature type="binding site" evidence="1">
    <location>
        <position position="101"/>
    </location>
    <ligand>
        <name>a divalent metal cation</name>
        <dbReference type="ChEBI" id="CHEBI:60240"/>
    </ligand>
</feature>
<gene>
    <name type="ordered locus">Mvan_5682</name>
</gene>
<sequence length="160" mass="16599">MTVTPRPTADLVDEIGPDVRSCDLQLRQYGGRTDFAGPITTVRCFQDNALLKSVLSEPGDGGVLVIDGDGSVHTALVGDVIAELGRSNGWSGLIINGAVRDASTLRTLDIGIKALGTNPRKSTKTGEGIRDEAVEFGGVVFTPGDIAYSDDDGIVVIAAG</sequence>
<dbReference type="EC" id="4.1.3.17"/>
<dbReference type="EC" id="4.1.1.112"/>
<dbReference type="EMBL" id="CP000511">
    <property type="protein sequence ID" value="ABM16447.1"/>
    <property type="molecule type" value="Genomic_DNA"/>
</dbReference>
<dbReference type="SMR" id="A1TGZ7"/>
<dbReference type="STRING" id="350058.Mvan_5682"/>
<dbReference type="KEGG" id="mva:Mvan_5682"/>
<dbReference type="eggNOG" id="COG0684">
    <property type="taxonomic scope" value="Bacteria"/>
</dbReference>
<dbReference type="HOGENOM" id="CLU_072626_4_0_11"/>
<dbReference type="Proteomes" id="UP000009159">
    <property type="component" value="Chromosome"/>
</dbReference>
<dbReference type="GO" id="GO:0047443">
    <property type="term" value="F:4-hydroxy-4-methyl-2-oxoglutarate aldolase activity"/>
    <property type="evidence" value="ECO:0007669"/>
    <property type="project" value="UniProtKB-EC"/>
</dbReference>
<dbReference type="GO" id="GO:0046872">
    <property type="term" value="F:metal ion binding"/>
    <property type="evidence" value="ECO:0007669"/>
    <property type="project" value="UniProtKB-KW"/>
</dbReference>
<dbReference type="GO" id="GO:0008948">
    <property type="term" value="F:oxaloacetate decarboxylase activity"/>
    <property type="evidence" value="ECO:0007669"/>
    <property type="project" value="UniProtKB-EC"/>
</dbReference>
<dbReference type="GO" id="GO:0008428">
    <property type="term" value="F:ribonuclease inhibitor activity"/>
    <property type="evidence" value="ECO:0007669"/>
    <property type="project" value="InterPro"/>
</dbReference>
<dbReference type="GO" id="GO:0051252">
    <property type="term" value="P:regulation of RNA metabolic process"/>
    <property type="evidence" value="ECO:0007669"/>
    <property type="project" value="InterPro"/>
</dbReference>
<dbReference type="CDD" id="cd16841">
    <property type="entry name" value="RraA_family"/>
    <property type="match status" value="1"/>
</dbReference>
<dbReference type="Gene3D" id="3.50.30.40">
    <property type="entry name" value="Ribonuclease E inhibitor RraA/RraA-like"/>
    <property type="match status" value="1"/>
</dbReference>
<dbReference type="InterPro" id="IPR010203">
    <property type="entry name" value="RraA"/>
</dbReference>
<dbReference type="InterPro" id="IPR005493">
    <property type="entry name" value="RraA/RraA-like"/>
</dbReference>
<dbReference type="InterPro" id="IPR036704">
    <property type="entry name" value="RraA/RraA-like_sf"/>
</dbReference>
<dbReference type="NCBIfam" id="TIGR01935">
    <property type="entry name" value="NOT-MenG"/>
    <property type="match status" value="1"/>
</dbReference>
<dbReference type="NCBIfam" id="NF006875">
    <property type="entry name" value="PRK09372.1"/>
    <property type="match status" value="1"/>
</dbReference>
<dbReference type="PANTHER" id="PTHR33254">
    <property type="entry name" value="4-HYDROXY-4-METHYL-2-OXOGLUTARATE ALDOLASE 3-RELATED"/>
    <property type="match status" value="1"/>
</dbReference>
<dbReference type="PANTHER" id="PTHR33254:SF4">
    <property type="entry name" value="4-HYDROXY-4-METHYL-2-OXOGLUTARATE ALDOLASE 3-RELATED"/>
    <property type="match status" value="1"/>
</dbReference>
<dbReference type="Pfam" id="PF03737">
    <property type="entry name" value="RraA-like"/>
    <property type="match status" value="1"/>
</dbReference>
<dbReference type="SUPFAM" id="SSF89562">
    <property type="entry name" value="RraA-like"/>
    <property type="match status" value="1"/>
</dbReference>
<name>RRAAH_MYCVP</name>
<proteinExistence type="inferred from homology"/>
<organism>
    <name type="scientific">Mycolicibacterium vanbaalenii (strain DSM 7251 / JCM 13017 / BCRC 16820 / KCTC 9966 / NRRL B-24157 / PYR-1)</name>
    <name type="common">Mycobacterium vanbaalenii</name>
    <dbReference type="NCBI Taxonomy" id="350058"/>
    <lineage>
        <taxon>Bacteria</taxon>
        <taxon>Bacillati</taxon>
        <taxon>Actinomycetota</taxon>
        <taxon>Actinomycetes</taxon>
        <taxon>Mycobacteriales</taxon>
        <taxon>Mycobacteriaceae</taxon>
        <taxon>Mycolicibacterium</taxon>
    </lineage>
</organism>
<reference key="1">
    <citation type="submission" date="2006-12" db="EMBL/GenBank/DDBJ databases">
        <title>Complete sequence of Mycobacterium vanbaalenii PYR-1.</title>
        <authorList>
            <consortium name="US DOE Joint Genome Institute"/>
            <person name="Copeland A."/>
            <person name="Lucas S."/>
            <person name="Lapidus A."/>
            <person name="Barry K."/>
            <person name="Detter J.C."/>
            <person name="Glavina del Rio T."/>
            <person name="Hammon N."/>
            <person name="Israni S."/>
            <person name="Dalin E."/>
            <person name="Tice H."/>
            <person name="Pitluck S."/>
            <person name="Singan V."/>
            <person name="Schmutz J."/>
            <person name="Larimer F."/>
            <person name="Land M."/>
            <person name="Hauser L."/>
            <person name="Kyrpides N."/>
            <person name="Anderson I.J."/>
            <person name="Miller C."/>
            <person name="Richardson P."/>
        </authorList>
    </citation>
    <scope>NUCLEOTIDE SEQUENCE [LARGE SCALE GENOMIC DNA]</scope>
    <source>
        <strain>DSM 7251 / JCM 13017 / BCRC 16820 / KCTC 9966 / NRRL B-24157 / PYR-1</strain>
    </source>
</reference>
<comment type="function">
    <text evidence="1">Catalyzes the aldol cleavage of 4-hydroxy-4-methyl-2-oxoglutarate (HMG) into 2 molecules of pyruvate. Also contains a secondary oxaloacetate (OAA) decarboxylase activity due to the common pyruvate enolate transition state formed following C-C bond cleavage in the retro-aldol and decarboxylation reactions (By similarity).</text>
</comment>
<comment type="catalytic activity">
    <reaction>
        <text>4-hydroxy-4-methyl-2-oxoglutarate = 2 pyruvate</text>
        <dbReference type="Rhea" id="RHEA:22748"/>
        <dbReference type="ChEBI" id="CHEBI:15361"/>
        <dbReference type="ChEBI" id="CHEBI:58276"/>
        <dbReference type="EC" id="4.1.3.17"/>
    </reaction>
</comment>
<comment type="catalytic activity">
    <reaction>
        <text>oxaloacetate + H(+) = pyruvate + CO2</text>
        <dbReference type="Rhea" id="RHEA:15641"/>
        <dbReference type="ChEBI" id="CHEBI:15361"/>
        <dbReference type="ChEBI" id="CHEBI:15378"/>
        <dbReference type="ChEBI" id="CHEBI:16452"/>
        <dbReference type="ChEBI" id="CHEBI:16526"/>
        <dbReference type="EC" id="4.1.1.112"/>
    </reaction>
</comment>
<comment type="cofactor">
    <cofactor evidence="1">
        <name>a divalent metal cation</name>
        <dbReference type="ChEBI" id="CHEBI:60240"/>
    </cofactor>
    <text evidence="1">Divalent metal cation.</text>
</comment>
<comment type="subunit">
    <text evidence="1">Homotrimer.</text>
</comment>
<comment type="similarity">
    <text evidence="2">Belongs to the class II aldolase/RraA-like family.</text>
</comment>